<proteinExistence type="evidence at protein level"/>
<organism>
    <name type="scientific">Homo sapiens</name>
    <name type="common">Human</name>
    <dbReference type="NCBI Taxonomy" id="9606"/>
    <lineage>
        <taxon>Eukaryota</taxon>
        <taxon>Metazoa</taxon>
        <taxon>Chordata</taxon>
        <taxon>Craniata</taxon>
        <taxon>Vertebrata</taxon>
        <taxon>Euteleostomi</taxon>
        <taxon>Mammalia</taxon>
        <taxon>Eutheria</taxon>
        <taxon>Euarchontoglires</taxon>
        <taxon>Primates</taxon>
        <taxon>Haplorrhini</taxon>
        <taxon>Catarrhini</taxon>
        <taxon>Hominidae</taxon>
        <taxon>Homo</taxon>
    </lineage>
</organism>
<name>SRPK1_HUMAN</name>
<keyword id="KW-0002">3D-structure</keyword>
<keyword id="KW-0025">Alternative splicing</keyword>
<keyword id="KW-0067">ATP-binding</keyword>
<keyword id="KW-0158">Chromosome</keyword>
<keyword id="KW-0159">Chromosome partition</keyword>
<keyword id="KW-0963">Cytoplasm</keyword>
<keyword id="KW-0221">Differentiation</keyword>
<keyword id="KW-0903">Direct protein sequencing</keyword>
<keyword id="KW-0256">Endoplasmic reticulum</keyword>
<keyword id="KW-0945">Host-virus interaction</keyword>
<keyword id="KW-0418">Kinase</keyword>
<keyword id="KW-0492">Microsome</keyword>
<keyword id="KW-0507">mRNA processing</keyword>
<keyword id="KW-0508">mRNA splicing</keyword>
<keyword id="KW-0547">Nucleotide-binding</keyword>
<keyword id="KW-0539">Nucleus</keyword>
<keyword id="KW-0597">Phosphoprotein</keyword>
<keyword id="KW-1267">Proteomics identification</keyword>
<keyword id="KW-1185">Reference proteome</keyword>
<keyword id="KW-0723">Serine/threonine-protein kinase</keyword>
<keyword id="KW-0808">Transferase</keyword>
<accession>Q96SB4</accession>
<accession>B4DS61</accession>
<accession>Q12890</accession>
<accession>Q5R364</accession>
<accession>Q5R365</accession>
<accession>Q8IY12</accession>
<reference evidence="27 28" key="1">
    <citation type="journal article" date="1994" name="Nature">
        <title>A serine kinase regulates intracellular localization of splicing factors in the cell cycle.</title>
        <authorList>
            <person name="Gui J.F."/>
            <person name="Lane W.S."/>
            <person name="Fu X.-D."/>
        </authorList>
    </citation>
    <scope>NUCLEOTIDE SEQUENCE [MRNA] (ISOFORM 2)</scope>
    <scope>FUNCTION</scope>
    <source>
        <tissue>Cervix carcinoma</tissue>
    </source>
</reference>
<reference key="2">
    <citation type="journal article" date="2004" name="Nat. Genet.">
        <title>Complete sequencing and characterization of 21,243 full-length human cDNAs.</title>
        <authorList>
            <person name="Ota T."/>
            <person name="Suzuki Y."/>
            <person name="Nishikawa T."/>
            <person name="Otsuki T."/>
            <person name="Sugiyama T."/>
            <person name="Irie R."/>
            <person name="Wakamatsu A."/>
            <person name="Hayashi K."/>
            <person name="Sato H."/>
            <person name="Nagai K."/>
            <person name="Kimura K."/>
            <person name="Makita H."/>
            <person name="Sekine M."/>
            <person name="Obayashi M."/>
            <person name="Nishi T."/>
            <person name="Shibahara T."/>
            <person name="Tanaka T."/>
            <person name="Ishii S."/>
            <person name="Yamamoto J."/>
            <person name="Saito K."/>
            <person name="Kawai Y."/>
            <person name="Isono Y."/>
            <person name="Nakamura Y."/>
            <person name="Nagahari K."/>
            <person name="Murakami K."/>
            <person name="Yasuda T."/>
            <person name="Iwayanagi T."/>
            <person name="Wagatsuma M."/>
            <person name="Shiratori A."/>
            <person name="Sudo H."/>
            <person name="Hosoiri T."/>
            <person name="Kaku Y."/>
            <person name="Kodaira H."/>
            <person name="Kondo H."/>
            <person name="Sugawara M."/>
            <person name="Takahashi M."/>
            <person name="Kanda K."/>
            <person name="Yokoi T."/>
            <person name="Furuya T."/>
            <person name="Kikkawa E."/>
            <person name="Omura Y."/>
            <person name="Abe K."/>
            <person name="Kamihara K."/>
            <person name="Katsuta N."/>
            <person name="Sato K."/>
            <person name="Tanikawa M."/>
            <person name="Yamazaki M."/>
            <person name="Ninomiya K."/>
            <person name="Ishibashi T."/>
            <person name="Yamashita H."/>
            <person name="Murakawa K."/>
            <person name="Fujimori K."/>
            <person name="Tanai H."/>
            <person name="Kimata M."/>
            <person name="Watanabe M."/>
            <person name="Hiraoka S."/>
            <person name="Chiba Y."/>
            <person name="Ishida S."/>
            <person name="Ono Y."/>
            <person name="Takiguchi S."/>
            <person name="Watanabe S."/>
            <person name="Yosida M."/>
            <person name="Hotuta T."/>
            <person name="Kusano J."/>
            <person name="Kanehori K."/>
            <person name="Takahashi-Fujii A."/>
            <person name="Hara H."/>
            <person name="Tanase T.-O."/>
            <person name="Nomura Y."/>
            <person name="Togiya S."/>
            <person name="Komai F."/>
            <person name="Hara R."/>
            <person name="Takeuchi K."/>
            <person name="Arita M."/>
            <person name="Imose N."/>
            <person name="Musashino K."/>
            <person name="Yuuki H."/>
            <person name="Oshima A."/>
            <person name="Sasaki N."/>
            <person name="Aotsuka S."/>
            <person name="Yoshikawa Y."/>
            <person name="Matsunawa H."/>
            <person name="Ichihara T."/>
            <person name="Shiohata N."/>
            <person name="Sano S."/>
            <person name="Moriya S."/>
            <person name="Momiyama H."/>
            <person name="Satoh N."/>
            <person name="Takami S."/>
            <person name="Terashima Y."/>
            <person name="Suzuki O."/>
            <person name="Nakagawa S."/>
            <person name="Senoh A."/>
            <person name="Mizoguchi H."/>
            <person name="Goto Y."/>
            <person name="Shimizu F."/>
            <person name="Wakebe H."/>
            <person name="Hishigaki H."/>
            <person name="Watanabe T."/>
            <person name="Sugiyama A."/>
            <person name="Takemoto M."/>
            <person name="Kawakami B."/>
            <person name="Yamazaki M."/>
            <person name="Watanabe K."/>
            <person name="Kumagai A."/>
            <person name="Itakura S."/>
            <person name="Fukuzumi Y."/>
            <person name="Fujimori Y."/>
            <person name="Komiyama M."/>
            <person name="Tashiro H."/>
            <person name="Tanigami A."/>
            <person name="Fujiwara T."/>
            <person name="Ono T."/>
            <person name="Yamada K."/>
            <person name="Fujii Y."/>
            <person name="Ozaki K."/>
            <person name="Hirao M."/>
            <person name="Ohmori Y."/>
            <person name="Kawabata A."/>
            <person name="Hikiji T."/>
            <person name="Kobatake N."/>
            <person name="Inagaki H."/>
            <person name="Ikema Y."/>
            <person name="Okamoto S."/>
            <person name="Okitani R."/>
            <person name="Kawakami T."/>
            <person name="Noguchi S."/>
            <person name="Itoh T."/>
            <person name="Shigeta K."/>
            <person name="Senba T."/>
            <person name="Matsumura K."/>
            <person name="Nakajima Y."/>
            <person name="Mizuno T."/>
            <person name="Morinaga M."/>
            <person name="Sasaki M."/>
            <person name="Togashi T."/>
            <person name="Oyama M."/>
            <person name="Hata H."/>
            <person name="Watanabe M."/>
            <person name="Komatsu T."/>
            <person name="Mizushima-Sugano J."/>
            <person name="Satoh T."/>
            <person name="Shirai Y."/>
            <person name="Takahashi Y."/>
            <person name="Nakagawa K."/>
            <person name="Okumura K."/>
            <person name="Nagase T."/>
            <person name="Nomura N."/>
            <person name="Kikuchi H."/>
            <person name="Masuho Y."/>
            <person name="Yamashita R."/>
            <person name="Nakai K."/>
            <person name="Yada T."/>
            <person name="Nakamura Y."/>
            <person name="Ohara O."/>
            <person name="Isogai T."/>
            <person name="Sugano S."/>
        </authorList>
    </citation>
    <scope>NUCLEOTIDE SEQUENCE [LARGE SCALE MRNA] (ISOFORM 3)</scope>
    <source>
        <tissue>Brain</tissue>
    </source>
</reference>
<reference key="3">
    <citation type="journal article" date="2001" name="J. Biol. Chem.">
        <title>Cloning and characterization of an alternatively spliced form of SR protein kinase 1 that interacts specifically with scaffold attachment factor-B.</title>
        <authorList>
            <person name="Nikolakaki E."/>
            <person name="Kohen R."/>
            <person name="Hartmann A.M."/>
            <person name="Stamm S."/>
            <person name="Georgatsou E."/>
            <person name="Giannakouros T."/>
        </authorList>
    </citation>
    <scope>NUCLEOTIDE SEQUENCE [MRNA] (ISOFORMS 1 AND 2)</scope>
    <scope>FUNCTION</scope>
    <scope>SUBCELLULAR LOCATION</scope>
    <scope>TISSUE SPECIFICITY</scope>
    <scope>INTERACTION WITH SAFB</scope>
    <source>
        <tissue evidence="5">Testis</tissue>
    </source>
</reference>
<reference key="4">
    <citation type="journal article" date="2003" name="Nature">
        <title>The DNA sequence and analysis of human chromosome 6.</title>
        <authorList>
            <person name="Mungall A.J."/>
            <person name="Palmer S.A."/>
            <person name="Sims S.K."/>
            <person name="Edwards C.A."/>
            <person name="Ashurst J.L."/>
            <person name="Wilming L."/>
            <person name="Jones M.C."/>
            <person name="Horton R."/>
            <person name="Hunt S.E."/>
            <person name="Scott C.E."/>
            <person name="Gilbert J.G.R."/>
            <person name="Clamp M.E."/>
            <person name="Bethel G."/>
            <person name="Milne S."/>
            <person name="Ainscough R."/>
            <person name="Almeida J.P."/>
            <person name="Ambrose K.D."/>
            <person name="Andrews T.D."/>
            <person name="Ashwell R.I.S."/>
            <person name="Babbage A.K."/>
            <person name="Bagguley C.L."/>
            <person name="Bailey J."/>
            <person name="Banerjee R."/>
            <person name="Barker D.J."/>
            <person name="Barlow K.F."/>
            <person name="Bates K."/>
            <person name="Beare D.M."/>
            <person name="Beasley H."/>
            <person name="Beasley O."/>
            <person name="Bird C.P."/>
            <person name="Blakey S.E."/>
            <person name="Bray-Allen S."/>
            <person name="Brook J."/>
            <person name="Brown A.J."/>
            <person name="Brown J.Y."/>
            <person name="Burford D.C."/>
            <person name="Burrill W."/>
            <person name="Burton J."/>
            <person name="Carder C."/>
            <person name="Carter N.P."/>
            <person name="Chapman J.C."/>
            <person name="Clark S.Y."/>
            <person name="Clark G."/>
            <person name="Clee C.M."/>
            <person name="Clegg S."/>
            <person name="Cobley V."/>
            <person name="Collier R.E."/>
            <person name="Collins J.E."/>
            <person name="Colman L.K."/>
            <person name="Corby N.R."/>
            <person name="Coville G.J."/>
            <person name="Culley K.M."/>
            <person name="Dhami P."/>
            <person name="Davies J."/>
            <person name="Dunn M."/>
            <person name="Earthrowl M.E."/>
            <person name="Ellington A.E."/>
            <person name="Evans K.A."/>
            <person name="Faulkner L."/>
            <person name="Francis M.D."/>
            <person name="Frankish A."/>
            <person name="Frankland J."/>
            <person name="French L."/>
            <person name="Garner P."/>
            <person name="Garnett J."/>
            <person name="Ghori M.J."/>
            <person name="Gilby L.M."/>
            <person name="Gillson C.J."/>
            <person name="Glithero R.J."/>
            <person name="Grafham D.V."/>
            <person name="Grant M."/>
            <person name="Gribble S."/>
            <person name="Griffiths C."/>
            <person name="Griffiths M.N.D."/>
            <person name="Hall R."/>
            <person name="Halls K.S."/>
            <person name="Hammond S."/>
            <person name="Harley J.L."/>
            <person name="Hart E.A."/>
            <person name="Heath P.D."/>
            <person name="Heathcott R."/>
            <person name="Holmes S.J."/>
            <person name="Howden P.J."/>
            <person name="Howe K.L."/>
            <person name="Howell G.R."/>
            <person name="Huckle E."/>
            <person name="Humphray S.J."/>
            <person name="Humphries M.D."/>
            <person name="Hunt A.R."/>
            <person name="Johnson C.M."/>
            <person name="Joy A.A."/>
            <person name="Kay M."/>
            <person name="Keenan S.J."/>
            <person name="Kimberley A.M."/>
            <person name="King A."/>
            <person name="Laird G.K."/>
            <person name="Langford C."/>
            <person name="Lawlor S."/>
            <person name="Leongamornlert D.A."/>
            <person name="Leversha M."/>
            <person name="Lloyd C.R."/>
            <person name="Lloyd D.M."/>
            <person name="Loveland J.E."/>
            <person name="Lovell J."/>
            <person name="Martin S."/>
            <person name="Mashreghi-Mohammadi M."/>
            <person name="Maslen G.L."/>
            <person name="Matthews L."/>
            <person name="McCann O.T."/>
            <person name="McLaren S.J."/>
            <person name="McLay K."/>
            <person name="McMurray A."/>
            <person name="Moore M.J.F."/>
            <person name="Mullikin J.C."/>
            <person name="Niblett D."/>
            <person name="Nickerson T."/>
            <person name="Novik K.L."/>
            <person name="Oliver K."/>
            <person name="Overton-Larty E.K."/>
            <person name="Parker A."/>
            <person name="Patel R."/>
            <person name="Pearce A.V."/>
            <person name="Peck A.I."/>
            <person name="Phillimore B.J.C.T."/>
            <person name="Phillips S."/>
            <person name="Plumb R.W."/>
            <person name="Porter K.M."/>
            <person name="Ramsey Y."/>
            <person name="Ranby S.A."/>
            <person name="Rice C.M."/>
            <person name="Ross M.T."/>
            <person name="Searle S.M."/>
            <person name="Sehra H.K."/>
            <person name="Sheridan E."/>
            <person name="Skuce C.D."/>
            <person name="Smith S."/>
            <person name="Smith M."/>
            <person name="Spraggon L."/>
            <person name="Squares S.L."/>
            <person name="Steward C.A."/>
            <person name="Sycamore N."/>
            <person name="Tamlyn-Hall G."/>
            <person name="Tester J."/>
            <person name="Theaker A.J."/>
            <person name="Thomas D.W."/>
            <person name="Thorpe A."/>
            <person name="Tracey A."/>
            <person name="Tromans A."/>
            <person name="Tubby B."/>
            <person name="Wall M."/>
            <person name="Wallis J.M."/>
            <person name="West A.P."/>
            <person name="White S.S."/>
            <person name="Whitehead S.L."/>
            <person name="Whittaker H."/>
            <person name="Wild A."/>
            <person name="Willey D.J."/>
            <person name="Wilmer T.E."/>
            <person name="Wood J.M."/>
            <person name="Wray P.W."/>
            <person name="Wyatt J.C."/>
            <person name="Young L."/>
            <person name="Younger R.M."/>
            <person name="Bentley D.R."/>
            <person name="Coulson A."/>
            <person name="Durbin R.M."/>
            <person name="Hubbard T."/>
            <person name="Sulston J.E."/>
            <person name="Dunham I."/>
            <person name="Rogers J."/>
            <person name="Beck S."/>
        </authorList>
    </citation>
    <scope>NUCLEOTIDE SEQUENCE [LARGE SCALE GENOMIC DNA]</scope>
</reference>
<reference key="5">
    <citation type="submission" date="2005-07" db="EMBL/GenBank/DDBJ databases">
        <authorList>
            <person name="Mural R.J."/>
            <person name="Istrail S."/>
            <person name="Sutton G."/>
            <person name="Florea L."/>
            <person name="Halpern A.L."/>
            <person name="Mobarry C.M."/>
            <person name="Lippert R."/>
            <person name="Walenz B."/>
            <person name="Shatkay H."/>
            <person name="Dew I."/>
            <person name="Miller J.R."/>
            <person name="Flanigan M.J."/>
            <person name="Edwards N.J."/>
            <person name="Bolanos R."/>
            <person name="Fasulo D."/>
            <person name="Halldorsson B.V."/>
            <person name="Hannenhalli S."/>
            <person name="Turner R."/>
            <person name="Yooseph S."/>
            <person name="Lu F."/>
            <person name="Nusskern D.R."/>
            <person name="Shue B.C."/>
            <person name="Zheng X.H."/>
            <person name="Zhong F."/>
            <person name="Delcher A.L."/>
            <person name="Huson D.H."/>
            <person name="Kravitz S.A."/>
            <person name="Mouchard L."/>
            <person name="Reinert K."/>
            <person name="Remington K.A."/>
            <person name="Clark A.G."/>
            <person name="Waterman M.S."/>
            <person name="Eichler E.E."/>
            <person name="Adams M.D."/>
            <person name="Hunkapiller M.W."/>
            <person name="Myers E.W."/>
            <person name="Venter J.C."/>
        </authorList>
    </citation>
    <scope>NUCLEOTIDE SEQUENCE [LARGE SCALE GENOMIC DNA]</scope>
</reference>
<reference key="6">
    <citation type="journal article" date="2004" name="Genome Res.">
        <title>The status, quality, and expansion of the NIH full-length cDNA project: the Mammalian Gene Collection (MGC).</title>
        <authorList>
            <consortium name="The MGC Project Team"/>
        </authorList>
    </citation>
    <scope>NUCLEOTIDE SEQUENCE [LARGE SCALE MRNA] (ISOFORM 2)</scope>
    <source>
        <tissue evidence="29">Testis</tissue>
    </source>
</reference>
<reference key="7">
    <citation type="journal article" date="2002" name="J. Virol.">
        <title>Identification of SRPK1 and SRPK2 as the major cellular protein kinases phosphorylating hepatitis B virus core protein.</title>
        <authorList>
            <person name="Daub H."/>
            <person name="Blencke S."/>
            <person name="Habenberger P."/>
            <person name="Kurtenbach A."/>
            <person name="Dennenmoser J."/>
            <person name="Wissing J."/>
            <person name="Ullrich A."/>
            <person name="Cotten M."/>
        </authorList>
    </citation>
    <scope>PROTEIN SEQUENCE OF 330-345 AND 353-375</scope>
    <scope>FUNCTION IN PHOSPHORYLATION OF HEPATITIS B VIRUS CORE PROTEIN</scope>
</reference>
<reference key="8">
    <citation type="journal article" date="2004" name="Cell Cycle">
        <title>Identification of toposome, a novel multisubunit complex containing topoisomerase IIalpha.</title>
        <authorList>
            <person name="Lee C.G."/>
            <person name="Hague L.K."/>
            <person name="Li H."/>
            <person name="Donnelly R."/>
        </authorList>
    </citation>
    <scope>PROTEIN SEQUENCE OF 376-400 AND 616-636</scope>
    <scope>FUNCTION</scope>
    <scope>IDENTIFICATION IN A TOPOSOME COMPLEX</scope>
</reference>
<reference key="9">
    <citation type="journal article" date="1997" name="Nature">
        <title>A protein related to splicing factor U2AF35 that interacts with U2AF65 and SR proteins in splicing of pre-mRNA.</title>
        <authorList>
            <person name="Tronchere H."/>
            <person name="Wang J."/>
            <person name="Fu X.D."/>
        </authorList>
    </citation>
    <scope>FUNCTION</scope>
    <scope>INTERACTION WITH ZRSR2</scope>
</reference>
<reference key="10">
    <citation type="journal article" date="1999" name="Biochem. Biophys. Res. Commun.">
        <title>SRPK1 and LBR protein kinases show identical substrate specificities.</title>
        <authorList>
            <person name="Papoutsopoulou S."/>
            <person name="Nikolakaki E."/>
            <person name="Giannakouros T."/>
        </authorList>
    </citation>
    <scope>FUNCTION IN PHOSPHORYLATION OF LBR</scope>
</reference>
<reference key="11">
    <citation type="journal article" date="1999" name="Nucleic Acids Res.">
        <title>SR protein-specific kinase 1 is highly expressed in testis and phosphorylates protamine 1.</title>
        <authorList>
            <person name="Papoutsopoulou S."/>
            <person name="Nikolakaki E."/>
            <person name="Chalepakis G."/>
            <person name="Kruft V."/>
            <person name="Chevaillier P."/>
            <person name="Giannakouros T."/>
        </authorList>
    </citation>
    <scope>FUNCTION IN PHOSPHORYLATION OF PRM1</scope>
    <scope>SUBCELLULAR LOCATION</scope>
    <scope>TISSUE SPECIFICITY</scope>
</reference>
<reference key="12">
    <citation type="journal article" date="2003" name="Proc. Natl. Acad. Sci. U.S.A.">
        <title>Processive phosphorylation of alternative splicing factor/splicing factor 2.</title>
        <authorList>
            <person name="Aubol B.E."/>
            <person name="Chakrabarti S."/>
            <person name="Ngo J."/>
            <person name="Shaffer J."/>
            <person name="Nolen B."/>
            <person name="Fu X.-D."/>
            <person name="Ghosh G."/>
            <person name="Adams J.A."/>
        </authorList>
    </citation>
    <scope>FUNCTION</scope>
    <scope>INTERACTION WITH SFRS1</scope>
</reference>
<reference key="13">
    <citation type="journal article" date="2003" name="Biochem. Biophys. Res. Commun.">
        <title>Protein kinase CK2 phosphorylates and activates the SR protein-specific kinase 1.</title>
        <authorList>
            <person name="Mylonis I."/>
            <person name="Giannakouros T."/>
        </authorList>
    </citation>
    <scope>ACTIVITY REGULATION</scope>
    <scope>PHOSPHORYLATION AT SER-51 AND SER-555</scope>
    <scope>MUTAGENESIS OF SER-37; SER-51; SER-222; SER-311; SER-436; SER-555 AND SER-619</scope>
</reference>
<reference key="14">
    <citation type="journal article" date="2005" name="Virology">
        <title>Suppression of hepatitis B virus replication by SRPK1 and SRPK2 via a pathway independent of the phosphorylation of the viral core protein.</title>
        <authorList>
            <person name="Zheng Y."/>
            <person name="Fu X.D."/>
            <person name="Ou J.H."/>
        </authorList>
    </citation>
    <scope>FUNCTION IN NEGATIVE REGULATION OF HEPATITIS B VIRUS (HBV) REPLICATION</scope>
</reference>
<reference key="15">
    <citation type="journal article" date="2006" name="Cell">
        <title>Global, in vivo, and site-specific phosphorylation dynamics in signaling networks.</title>
        <authorList>
            <person name="Olsen J.V."/>
            <person name="Blagoev B."/>
            <person name="Gnad F."/>
            <person name="Macek B."/>
            <person name="Kumar C."/>
            <person name="Mortensen P."/>
            <person name="Mann M."/>
        </authorList>
    </citation>
    <scope>PHOSPHORYLATION [LARGE SCALE ANALYSIS] AT SER-51</scope>
    <scope>IDENTIFICATION BY MASS SPECTROMETRY [LARGE SCALE ANALYSIS]</scope>
    <source>
        <tissue>Cervix carcinoma</tissue>
    </source>
</reference>
<reference key="16">
    <citation type="journal article" date="2008" name="J. Mol. Biol.">
        <title>Ordered multi-site phosphorylation of the splicing factor ASF/SF2 by SRPK1.</title>
        <authorList>
            <person name="Ma C.T."/>
            <person name="Velazquez-Dones A."/>
            <person name="Hagopian J.C."/>
            <person name="Ghosh G."/>
            <person name="Fu X.D."/>
            <person name="Adams J.A."/>
        </authorList>
    </citation>
    <scope>FUNCTION IN PHOSPHORYLATION OF SRSF1</scope>
    <scope>THE MECHANISM OF PHOSPHORYLATION</scope>
</reference>
<reference key="17">
    <citation type="journal article" date="2008" name="J. Mol. Biol.">
        <title>Adaptable molecular interactions guide phosphorylation of the SR protein ASF/SF2 by SRPK1.</title>
        <authorList>
            <person name="Hagopian J.C."/>
            <person name="Ma C.T."/>
            <person name="Meade B.R."/>
            <person name="Albuquerque C.P."/>
            <person name="Ngo J.C."/>
            <person name="Ghosh G."/>
            <person name="Jennings P.A."/>
            <person name="Fu X.D."/>
            <person name="Adams J.A."/>
        </authorList>
    </citation>
    <scope>FUNCTION IN PHOSPHORYLATION OF SRSF1</scope>
    <scope>THE MECHANISM OF PHOSPHORYLATION</scope>
</reference>
<reference key="18">
    <citation type="journal article" date="2008" name="Mol. Cell">
        <title>Kinase-selective enrichment enables quantitative phosphoproteomics of the kinome across the cell cycle.</title>
        <authorList>
            <person name="Daub H."/>
            <person name="Olsen J.V."/>
            <person name="Bairlein M."/>
            <person name="Gnad F."/>
            <person name="Oppermann F.S."/>
            <person name="Korner R."/>
            <person name="Greff Z."/>
            <person name="Keri G."/>
            <person name="Stemmann O."/>
            <person name="Mann M."/>
        </authorList>
    </citation>
    <scope>PHOSPHORYLATION [LARGE SCALE ANALYSIS] AT SER-51</scope>
    <scope>IDENTIFICATION BY MASS SPECTROMETRY [LARGE SCALE ANALYSIS]</scope>
    <source>
        <tissue>Cervix carcinoma</tissue>
    </source>
</reference>
<reference key="19">
    <citation type="journal article" date="2008" name="Proc. Natl. Acad. Sci. U.S.A.">
        <title>A quantitative atlas of mitotic phosphorylation.</title>
        <authorList>
            <person name="Dephoure N."/>
            <person name="Zhou C."/>
            <person name="Villen J."/>
            <person name="Beausoleil S.A."/>
            <person name="Bakalarski C.E."/>
            <person name="Elledge S.J."/>
            <person name="Gygi S.P."/>
        </authorList>
    </citation>
    <scope>PHOSPHORYLATION [LARGE SCALE ANALYSIS] AT SER-51</scope>
    <scope>IDENTIFICATION BY MASS SPECTROMETRY [LARGE SCALE ANALYSIS]</scope>
    <source>
        <tissue>Cervix carcinoma</tissue>
    </source>
</reference>
<reference key="20">
    <citation type="journal article" date="2009" name="Anal. Chem.">
        <title>Lys-N and trypsin cover complementary parts of the phosphoproteome in a refined SCX-based approach.</title>
        <authorList>
            <person name="Gauci S."/>
            <person name="Helbig A.O."/>
            <person name="Slijper M."/>
            <person name="Krijgsveld J."/>
            <person name="Heck A.J."/>
            <person name="Mohammed S."/>
        </authorList>
    </citation>
    <scope>IDENTIFICATION BY MASS SPECTROMETRY [LARGE SCALE ANALYSIS]</scope>
</reference>
<reference key="21">
    <citation type="journal article" date="2009" name="Biochemistry">
        <title>Allosteric interactions direct binding and phosphorylation of ASF/SF2 by SRPK1.</title>
        <authorList>
            <person name="Huynh N."/>
            <person name="Ma C.T."/>
            <person name="Giang N."/>
            <person name="Hagopian J."/>
            <person name="Ngo J."/>
            <person name="Adams J."/>
            <person name="Ghosh G."/>
        </authorList>
    </citation>
    <scope>FUNCTION IN PHOSPHORYLATION OF SRSF1</scope>
    <scope>THE MECHANISM OF PHOSPHORYLATION</scope>
</reference>
<reference key="22">
    <citation type="journal article" date="2009" name="FEBS J.">
        <title>The enzymatic activity of SR protein kinases 1 and 1a is negatively affected by interaction with scaffold attachment factors B1 and 2.</title>
        <authorList>
            <person name="Tsianou D."/>
            <person name="Nikolakaki E."/>
            <person name="Tzitzira A."/>
            <person name="Bonanou S."/>
            <person name="Giannakouros T."/>
            <person name="Georgatsou E."/>
        </authorList>
    </citation>
    <scope>INTERACTION WITH SAFB/SAFB1 AND SAFB2</scope>
</reference>
<reference key="23">
    <citation type="journal article" date="2009" name="Genes Dev.">
        <title>Regulation of SR protein phosphorylation and alternative splicing by modulating kinetic interactions of SRPK1 with molecular chaperones.</title>
        <authorList>
            <person name="Zhong X.Y."/>
            <person name="Ding J.H."/>
            <person name="Adams J.A."/>
            <person name="Ghosh G."/>
            <person name="Fu X.D."/>
        </authorList>
    </citation>
    <scope>FUNCTION</scope>
    <scope>SUBCELLULAR LOCATION</scope>
    <scope>INTERACTION WITH DNAJC8 AND AHSA1/AHA1</scope>
</reference>
<reference key="24">
    <citation type="journal article" date="2009" name="J. Mol. Biol.">
        <title>Regiospecific phosphorylation control of the SR protein ASF/SF2 by SRPK1.</title>
        <authorList>
            <person name="Ma C.T."/>
            <person name="Hagopian J.C."/>
            <person name="Ghosh G."/>
            <person name="Fu X.D."/>
            <person name="Adams J.A."/>
        </authorList>
    </citation>
    <scope>FUNCTION IN PHOSPHORYLATION OF SRSF1</scope>
    <scope>THE MECHANISM OF PHOSPHORYLATION</scope>
</reference>
<reference key="25">
    <citation type="journal article" date="2009" name="J. Virol.">
        <title>Arginine methylation of the ICP27 RGG box regulates the functional interactions of ICP27 with SRPK1 and Aly/REF during herpes simplex virus 1 infection.</title>
        <authorList>
            <person name="Souki S.K."/>
            <person name="Sandri-Goldin R.M."/>
        </authorList>
    </citation>
    <scope>INTERACTION WITH HHV-1 ICP27 PROTEIN (MICROBIAL INFECTION)</scope>
</reference>
<reference key="26">
    <citation type="journal article" date="2009" name="Sci. Signal.">
        <title>Quantitative phosphoproteomic analysis of T cell receptor signaling reveals system-wide modulation of protein-protein interactions.</title>
        <authorList>
            <person name="Mayya V."/>
            <person name="Lundgren D.H."/>
            <person name="Hwang S.-I."/>
            <person name="Rezaul K."/>
            <person name="Wu L."/>
            <person name="Eng J.K."/>
            <person name="Rodionov V."/>
            <person name="Han D.K."/>
        </authorList>
    </citation>
    <scope>PHOSPHORYLATION [LARGE SCALE ANALYSIS] AT SER-51</scope>
    <scope>IDENTIFICATION BY MASS SPECTROMETRY [LARGE SCALE ANALYSIS]</scope>
    <source>
        <tissue>Leukemic T-cell</tissue>
    </source>
</reference>
<reference key="27">
    <citation type="journal article" date="2010" name="Biochim. Biophys. Acta">
        <title>The ratio of SRPK1/SRPK1a regulates erythroid differentiation in K562 leukaemic cells.</title>
        <authorList>
            <person name="Sanidas I."/>
            <person name="Kotoula V."/>
            <person name="Ritou E."/>
            <person name="Daans J."/>
            <person name="Lenz C."/>
            <person name="Mairhofer M."/>
            <person name="Daniilidou M."/>
            <person name="Kolbus A."/>
            <person name="Kruft V."/>
            <person name="Ponsaerts P."/>
            <person name="Nikolakaki E."/>
        </authorList>
    </citation>
    <scope>FUNCTION</scope>
    <scope>SUBCELLULAR LOCATION</scope>
    <scope>TISSUE SPECIFICITY</scope>
    <scope>IDENTIFICATION OF ISOFORM 1 IN A COMPLEX WITH DHX9; MOV10; MATR3; HNRNPU; NCL; DDX21; HSD17B4; PABPC1; HNRNPM; IGF2BP1; SYNCRIP; RPL3; VIM; YBX1; NPM1; HNRNPA2B1; HNRNPC; RPLP0; RPL7A AND RALY</scope>
</reference>
<reference key="28">
    <citation type="journal article" date="2011" name="BMC Syst. Biol.">
        <title>Initial characterization of the human central proteome.</title>
        <authorList>
            <person name="Burkard T.R."/>
            <person name="Planyavsky M."/>
            <person name="Kaupe I."/>
            <person name="Breitwieser F.P."/>
            <person name="Buerckstuemmer T."/>
            <person name="Bennett K.L."/>
            <person name="Superti-Furga G."/>
            <person name="Colinge J."/>
        </authorList>
    </citation>
    <scope>IDENTIFICATION BY MASS SPECTROMETRY [LARGE SCALE ANALYSIS]</scope>
</reference>
<reference key="29">
    <citation type="journal article" date="2011" name="EMBO J.">
        <title>Acetylation and phosphorylation of SRSF2 control cell fate decision in response to cisplatin.</title>
        <authorList>
            <person name="Edmond V."/>
            <person name="Moysan E."/>
            <person name="Khochbin S."/>
            <person name="Matthias P."/>
            <person name="Brambilla C."/>
            <person name="Brambilla E."/>
            <person name="Gazzeri S."/>
            <person name="Eymin B."/>
        </authorList>
    </citation>
    <scope>SUBCELLULAR LOCATION</scope>
</reference>
<reference key="30">
    <citation type="journal article" date="2011" name="FEBS J.">
        <title>Serine-arginine protein kinases: a small protein kinase family with a large cellular presence.</title>
        <authorList>
            <person name="Giannakouros T."/>
            <person name="Nikolakaki E."/>
            <person name="Mylonis I."/>
            <person name="Georgatsou E."/>
        </authorList>
    </citation>
    <scope>REVIEW ON FUNCTION</scope>
</reference>
<reference key="31">
    <citation type="journal article" date="2011" name="FEBS J.">
        <title>Phosphorylation mechanism and structure of serine-arginine protein kinases.</title>
        <authorList>
            <person name="Ghosh G."/>
            <person name="Adams J.A."/>
        </authorList>
    </citation>
    <scope>REVIEW ON FUNCTION</scope>
</reference>
<reference key="32">
    <citation type="journal article" date="2011" name="Sci. Signal.">
        <title>System-wide temporal characterization of the proteome and phosphoproteome of human embryonic stem cell differentiation.</title>
        <authorList>
            <person name="Rigbolt K.T."/>
            <person name="Prokhorova T.A."/>
            <person name="Akimov V."/>
            <person name="Henningsen J."/>
            <person name="Johansen P.T."/>
            <person name="Kratchmarova I."/>
            <person name="Kassem M."/>
            <person name="Mann M."/>
            <person name="Olsen J.V."/>
            <person name="Blagoev B."/>
        </authorList>
    </citation>
    <scope>IDENTIFICATION BY MASS SPECTROMETRY [LARGE SCALE ANALYSIS]</scope>
</reference>
<reference key="33">
    <citation type="journal article" date="2013" name="J. Proteome Res.">
        <title>Toward a comprehensive characterization of a human cancer cell phosphoproteome.</title>
        <authorList>
            <person name="Zhou H."/>
            <person name="Di Palma S."/>
            <person name="Preisinger C."/>
            <person name="Peng M."/>
            <person name="Polat A.N."/>
            <person name="Heck A.J."/>
            <person name="Mohammed S."/>
        </authorList>
    </citation>
    <scope>PHOSPHORYLATION [LARGE SCALE ANALYSIS] AT SER-51; SER-309; SER-311 AND SER-333</scope>
    <scope>IDENTIFICATION BY MASS SPECTROMETRY [LARGE SCALE ANALYSIS]</scope>
    <source>
        <tissue>Cervix carcinoma</tissue>
        <tissue>Erythroleukemia</tissue>
    </source>
</reference>
<reference key="34">
    <citation type="journal article" date="2014" name="J. Proteomics">
        <title>An enzyme assisted RP-RPLC approach for in-depth analysis of human liver phosphoproteome.</title>
        <authorList>
            <person name="Bian Y."/>
            <person name="Song C."/>
            <person name="Cheng K."/>
            <person name="Dong M."/>
            <person name="Wang F."/>
            <person name="Huang J."/>
            <person name="Sun D."/>
            <person name="Wang L."/>
            <person name="Ye M."/>
            <person name="Zou H."/>
        </authorList>
    </citation>
    <scope>PHOSPHORYLATION [LARGE SCALE ANALYSIS] AT SER-309 AND SER-311</scope>
    <scope>IDENTIFICATION BY MASS SPECTROMETRY [LARGE SCALE ANALYSIS]</scope>
    <source>
        <tissue>Liver</tissue>
    </source>
</reference>
<reference key="35">
    <citation type="journal article" date="2015" name="Proteomics">
        <title>N-terminome analysis of the human mitochondrial proteome.</title>
        <authorList>
            <person name="Vaca Jacome A.S."/>
            <person name="Rabilloud T."/>
            <person name="Schaeffer-Reiss C."/>
            <person name="Rompais M."/>
            <person name="Ayoub D."/>
            <person name="Lane L."/>
            <person name="Bairoch A."/>
            <person name="Van Dorsselaer A."/>
            <person name="Carapito C."/>
        </authorList>
    </citation>
    <scope>IDENTIFICATION BY MASS SPECTROMETRY [LARGE SCALE ANALYSIS]</scope>
</reference>
<reference key="36">
    <citation type="journal article" date="2017" name="Cell Rep.">
        <title>Transcription Dynamics Prevent RNA-Mediated Genomic Instability through SRPK2-Dependent DDX23 Phosphorylation.</title>
        <authorList>
            <person name="Sridhara S.C."/>
            <person name="Carvalho S."/>
            <person name="Grosso A.R."/>
            <person name="Gallego-Paez L.M."/>
            <person name="Carmo-Fonseca M."/>
            <person name="de Almeida S.F."/>
        </authorList>
    </citation>
    <scope>SUBCELLULAR LOCATION</scope>
</reference>
<reference key="37">
    <citation type="journal article" date="2005" name="Mol. Cell">
        <title>Interplay between SRPK and Clk/Sty kinases in phosphorylation of the splicing factor ASF/SF2 is regulated by a docking motif in ASF/SF2.</title>
        <authorList>
            <person name="Ngo J.C.K."/>
            <person name="Chakrabarti S."/>
            <person name="Ding J.-H."/>
            <person name="Velazquez-Dones A."/>
            <person name="Nolen B."/>
            <person name="Aubol B.E."/>
            <person name="Adams J.A."/>
            <person name="Fu X.-D."/>
            <person name="Ghosh G."/>
        </authorList>
    </citation>
    <scope>X-RAY CRYSTALLOGRAPHY (2.4 ANGSTROMS) OF 42-438 IN COMPLEX WITH ATP AND SUBSTRATE PEPTIDE</scope>
    <scope>FUNCTION</scope>
    <scope>INTERACTION WITH SFRS1</scope>
</reference>
<reference key="38">
    <citation type="journal article" date="2007" name="Structure">
        <title>SR protein kinase 1 is resilient to inactivation.</title>
        <authorList>
            <person name="Ngo J.C."/>
            <person name="Gullingsrud J."/>
            <person name="Giang K."/>
            <person name="Yeh M.J."/>
            <person name="Fu X.D."/>
            <person name="Adams J.A."/>
            <person name="McCammon J.A."/>
            <person name="Ghosh G."/>
        </authorList>
    </citation>
    <scope>X-RAY CRYSTALLOGRAPHY (1.73 ANGSTROMS) OF 42-655</scope>
    <scope>SUBUNIT</scope>
</reference>
<reference key="39">
    <citation type="journal article" date="2008" name="Mol. Cell">
        <title>A sliding docking interaction is essential for sequential and processive phosphorylation of an SR protein by SRPK1.</title>
        <authorList>
            <person name="Ngo J.C."/>
            <person name="Giang K."/>
            <person name="Chakrabarti S."/>
            <person name="Ma C.T."/>
            <person name="Huynh N."/>
            <person name="Hagopian J.C."/>
            <person name="Dorrestein P.C."/>
            <person name="Fu X.D."/>
            <person name="Adams J.A."/>
            <person name="Ghosh G."/>
        </authorList>
    </citation>
    <scope>X-RAY CRYSTALLOGRAPHY (2.9 ANGSTROMS) OF 58-655 IN COMPLEX WITH SRSF1</scope>
    <scope>MECHANISM OF PHOSPHORYLATION OF SRSF1</scope>
</reference>
<gene>
    <name evidence="30" type="primary">SRPK1</name>
</gene>
<comment type="function">
    <text evidence="3 4 5 6 8 9 10 11 13 15 16 17 20 21 23 24">Serine/arginine-rich protein-specific kinase which specifically phosphorylates its substrates at serine residues located in regions rich in arginine/serine dipeptides, known as RS domains and is involved in the phosphorylation of SR splicing factors and the regulation of splicing. Plays a central role in the regulatory network for splicing, controlling the intranuclear distribution of splicing factors in interphase cells and the reorganization of nuclear speckles during mitosis. Can influence additional steps of mRNA maturation, as well as other cellular activities, such as chromatin reorganization in somatic and sperm cells and cell cycle progression. Isoform 2 phosphorylates SFRS2, ZRSR2, LBR and PRM1. Isoform 2 phosphorylates SRSF1 using a directional (C-terminal to N-terminal) and a dual-track mechanism incorporating both processive phosphorylation (in which the kinase stays attached to the substrate after each round of phosphorylation) and distributive phosphorylation steps (in which the kinase and substrate dissociate after each phosphorylation event). The RS domain of SRSF1 binds first to a docking groove in the large lobe of the kinase domain of SRPK1. This induces certain structural changes in SRPK1 and/or RRM2 domain of SRSF1, allowing RRM2 to bind the kinase and initiate phosphorylation. The cycles continue for several phosphorylation steps in a processive manner (steps 1-8) until the last few phosphorylation steps (approximately steps 9-12). During that time, a mechanical stress induces the unfolding of the beta-4 motif in RRM2, which then docks at the docking groove of SRPK1. This also signals RRM2 to begin to dissociate, which facilitates SRSF1 dissociation after phosphorylation is completed. Isoform 2 can mediate hepatitis B virus (HBV) core protein phosphorylation. It plays a negative role in the regulation of HBV replication through a mechanism not involving the phosphorylation of the core protein but by reducing the packaging efficiency of the pregenomic RNA (pgRNA) without affecting the formation of the viral core particles. Isoform 1 and isoform 2 can induce splicing of exon 10 in MAPT/TAU. The ratio of isoform 1/isoform 2 plays a decisive role in determining cell fate in K-562 leukaemic cell line: isoform 2 favors proliferation where as isoform 1 favors differentiation.</text>
</comment>
<comment type="catalytic activity">
    <reaction evidence="5 6 7 8 9 23">
        <text>L-seryl-[protein] + ATP = O-phospho-L-seryl-[protein] + ADP + H(+)</text>
        <dbReference type="Rhea" id="RHEA:17989"/>
        <dbReference type="Rhea" id="RHEA-COMP:9863"/>
        <dbReference type="Rhea" id="RHEA-COMP:11604"/>
        <dbReference type="ChEBI" id="CHEBI:15378"/>
        <dbReference type="ChEBI" id="CHEBI:29999"/>
        <dbReference type="ChEBI" id="CHEBI:30616"/>
        <dbReference type="ChEBI" id="CHEBI:83421"/>
        <dbReference type="ChEBI" id="CHEBI:456216"/>
        <dbReference type="EC" id="2.7.11.1"/>
    </reaction>
</comment>
<comment type="catalytic activity">
    <reaction evidence="5 6 7 8 9 23">
        <text>L-threonyl-[protein] + ATP = O-phospho-L-threonyl-[protein] + ADP + H(+)</text>
        <dbReference type="Rhea" id="RHEA:46608"/>
        <dbReference type="Rhea" id="RHEA-COMP:11060"/>
        <dbReference type="Rhea" id="RHEA-COMP:11605"/>
        <dbReference type="ChEBI" id="CHEBI:15378"/>
        <dbReference type="ChEBI" id="CHEBI:30013"/>
        <dbReference type="ChEBI" id="CHEBI:30616"/>
        <dbReference type="ChEBI" id="CHEBI:61977"/>
        <dbReference type="ChEBI" id="CHEBI:456216"/>
        <dbReference type="EC" id="2.7.11.1"/>
    </reaction>
</comment>
<comment type="cofactor">
    <cofactor evidence="5 6 7 8 9 23">
        <name>Mg(2+)</name>
        <dbReference type="ChEBI" id="CHEBI:18420"/>
    </cofactor>
</comment>
<comment type="activity regulation">
    <text evidence="7">Activated by phosphorylation on Ser-51 and Ser-555.</text>
</comment>
<comment type="subunit">
    <text evidence="5 8 9 11 12 14 16 19 24">Monomer. Isoform 2 is found in a multisubunit complex containing seven proteins, named toposome, which separates entangled circular chromatin DNA during chromosome segregation. Isoform 2 interacts with DNAJC8 and AHSA1/AHA1 and this mediates formation of a complex with the Hsp70 /Hsp90 machinery. Isoform 1 is found in a complex with: DHX9, MOV10, MATR3, HNRNPU, NCL, DDX21, HSD17B4, PABPC1, HNRNPM, IGF2BP1, SYNCRIP, RPL3, VIM, YBX1, NPM1, HNRNPA2B1, HNRNPC, RPLP0, RPL7A and RALY. Isoform 2 binds to IGF2BP1, SYNCRIP, HNRNPA2B1 and HNRNPC. Isoform 1 and isoform 2 interact with SAFB which inhibits its activity. Isoform 2 interacts with SAFB2 which inhibits its activity.</text>
</comment>
<comment type="subunit">
    <text evidence="18">(Microbial infection) Isoform 2 interacts with HHV-1 ICP27 protein.</text>
</comment>
<comment type="interaction">
    <interactant intactId="EBI-539478">
        <id>Q96SB4</id>
    </interactant>
    <interactant intactId="EBI-2683099">
        <id>Q66PJ3</id>
        <label>ARL6IP4</label>
    </interactant>
    <organismsDiffer>false</organismsDiffer>
    <experiments>2</experiments>
</comment>
<comment type="interaction">
    <interactant intactId="EBI-539478">
        <id>Q96SB4</id>
    </interactant>
    <interactant intactId="EBI-1245958">
        <id>P50613</id>
        <label>CDK7</label>
    </interactant>
    <organismsDiffer>false</organismsDiffer>
    <experiments>2</experiments>
</comment>
<comment type="interaction">
    <interactant intactId="EBI-539478">
        <id>Q96SB4</id>
    </interactant>
    <interactant intactId="EBI-528411">
        <id>Q8WYQ5</id>
        <label>DGCR8</label>
    </interactant>
    <organismsDiffer>false</organismsDiffer>
    <experiments>4</experiments>
</comment>
<comment type="interaction">
    <interactant intactId="EBI-539478">
        <id>Q96SB4</id>
    </interactant>
    <interactant intactId="EBI-2511477">
        <id>Q14562</id>
        <label>DHX8</label>
    </interactant>
    <organismsDiffer>false</organismsDiffer>
    <experiments>4</experiments>
</comment>
<comment type="interaction">
    <interactant intactId="EBI-539478">
        <id>Q96SB4</id>
    </interactant>
    <interactant intactId="EBI-744525">
        <id>Q13601</id>
        <label>KRR1</label>
    </interactant>
    <organismsDiffer>false</organismsDiffer>
    <experiments>2</experiments>
</comment>
<comment type="interaction">
    <interactant intactId="EBI-539478">
        <id>Q96SB4</id>
    </interactant>
    <interactant intactId="EBI-473747">
        <id>Q9NQ29</id>
        <label>LUC7L</label>
    </interactant>
    <organismsDiffer>false</organismsDiffer>
    <experiments>4</experiments>
</comment>
<comment type="interaction">
    <interactant intactId="EBI-539478">
        <id>Q96SB4</id>
    </interactant>
    <interactant intactId="EBI-352851">
        <id>Q9Y383</id>
        <label>LUC7L2</label>
    </interactant>
    <organismsDiffer>false</organismsDiffer>
    <experiments>4</experiments>
</comment>
<comment type="interaction">
    <interactant intactId="EBI-539478">
        <id>Q96SB4</id>
    </interactant>
    <interactant intactId="EBI-715374">
        <id>Q8NAV1</id>
        <label>PRPF38A</label>
    </interactant>
    <organismsDiffer>false</organismsDiffer>
    <experiments>3</experiments>
</comment>
<comment type="interaction">
    <interactant intactId="EBI-539478">
        <id>Q96SB4</id>
    </interactant>
    <interactant intactId="EBI-702142">
        <id>Q05397</id>
        <label>PTK2</label>
    </interactant>
    <organismsDiffer>false</organismsDiffer>
    <experiments>2</experiments>
</comment>
<comment type="interaction">
    <interactant intactId="EBI-539478">
        <id>Q96SB4</id>
    </interactant>
    <interactant intactId="EBI-395290">
        <id>Q14498</id>
        <label>RBM39</label>
    </interactant>
    <organismsDiffer>false</organismsDiffer>
    <experiments>4</experiments>
</comment>
<comment type="interaction">
    <interactant intactId="EBI-539478">
        <id>Q96SB4</id>
    </interactant>
    <interactant intactId="EBI-447231">
        <id>Q9Y5S9</id>
        <label>RBM8A</label>
    </interactant>
    <organismsDiffer>false</organismsDiffer>
    <experiments>3</experiments>
</comment>
<comment type="interaction">
    <interactant intactId="EBI-539478">
        <id>Q96SB4</id>
    </interactant>
    <interactant intactId="EBI-395959">
        <id>Q15287</id>
        <label>RNPS1</label>
    </interactant>
    <organismsDiffer>false</organismsDiffer>
    <experiments>5</experiments>
</comment>
<comment type="interaction">
    <interactant intactId="EBI-539478">
        <id>Q96SB4</id>
    </interactant>
    <interactant intactId="EBI-1049228">
        <id>P08621</id>
        <label>SNRNP70</label>
    </interactant>
    <organismsDiffer>false</organismsDiffer>
    <experiments>5</experiments>
</comment>
<comment type="interaction">
    <interactant intactId="EBI-539478">
        <id>Q96SB4</id>
    </interactant>
    <interactant intactId="EBI-372789">
        <id>P62318</id>
        <label>SNRPD3</label>
    </interactant>
    <organismsDiffer>false</organismsDiffer>
    <experiments>2</experiments>
</comment>
<comment type="interaction">
    <interactant intactId="EBI-539478">
        <id>Q96SB4</id>
    </interactant>
    <interactant intactId="EBI-1044237">
        <id>Q8WXA9</id>
        <label>SREK1</label>
    </interactant>
    <organismsDiffer>false</organismsDiffer>
    <experiments>2</experiments>
</comment>
<comment type="interaction">
    <interactant intactId="EBI-539478">
        <id>Q96SB4</id>
    </interactant>
    <interactant intactId="EBI-6381269">
        <id>Q9UPE1</id>
        <label>SRPK3</label>
    </interactant>
    <organismsDiffer>false</organismsDiffer>
    <experiments>3</experiments>
</comment>
<comment type="interaction">
    <interactant intactId="EBI-539478">
        <id>Q96SB4</id>
    </interactant>
    <interactant intactId="EBI-398920">
        <id>Q07955</id>
        <label>SRSF1</label>
    </interactant>
    <organismsDiffer>false</organismsDiffer>
    <experiments>3</experiments>
</comment>
<comment type="interaction">
    <interactant intactId="EBI-539478">
        <id>Q96SB4</id>
    </interactant>
    <interactant intactId="EBI-372557">
        <id>P84103</id>
        <label>SRSF3</label>
    </interactant>
    <organismsDiffer>false</organismsDiffer>
    <experiments>2</experiments>
</comment>
<comment type="interaction">
    <interactant intactId="EBI-539478">
        <id>Q96SB4</id>
    </interactant>
    <interactant intactId="EBI-745230">
        <id>Q13247</id>
        <label>SRSF6</label>
    </interactant>
    <organismsDiffer>false</organismsDiffer>
    <experiments>3</experiments>
</comment>
<comment type="interaction">
    <interactant intactId="EBI-539478">
        <id>Q96SB4</id>
    </interactant>
    <interactant intactId="EBI-398885">
        <id>Q16629</id>
        <label>SRSF7</label>
    </interactant>
    <organismsDiffer>false</organismsDiffer>
    <experiments>3</experiments>
</comment>
<comment type="interaction">
    <interactant intactId="EBI-539478">
        <id>Q96SB4</id>
    </interactant>
    <interactant intactId="EBI-6380719">
        <id>Q9BRL6</id>
        <label>SRSF8</label>
    </interactant>
    <organismsDiffer>false</organismsDiffer>
    <experiments>2</experiments>
</comment>
<comment type="interaction">
    <interactant intactId="EBI-539478">
        <id>Q96SB4</id>
    </interactant>
    <interactant intactId="EBI-366083">
        <id>P04637</id>
        <label>TP53</label>
    </interactant>
    <organismsDiffer>false</organismsDiffer>
    <experiments>3</experiments>
</comment>
<comment type="interaction">
    <interactant intactId="EBI-539478">
        <id>Q96SB4</id>
    </interactant>
    <interactant intactId="EBI-632461">
        <id>Q01081</id>
        <label>U2AF1</label>
    </interactant>
    <organismsDiffer>false</organismsDiffer>
    <experiments>4</experiments>
</comment>
<comment type="interaction">
    <interactant intactId="EBI-539478">
        <id>Q96SB4</id>
    </interactant>
    <interactant intactId="EBI-1044822">
        <id>Q53GS9</id>
        <label>USP39</label>
    </interactant>
    <organismsDiffer>false</organismsDiffer>
    <experiments>2</experiments>
</comment>
<comment type="interaction">
    <interactant intactId="EBI-539478">
        <id>Q96SB4</id>
    </interactant>
    <interactant intactId="EBI-2849854">
        <id>Q96MU7</id>
        <label>YTHDC1</label>
    </interactant>
    <organismsDiffer>false</organismsDiffer>
    <experiments>3</experiments>
</comment>
<comment type="interaction">
    <interactant intactId="EBI-539478">
        <id>Q96SB4</id>
    </interactant>
    <interactant intactId="EBI-6657923">
        <id>Q15696</id>
        <label>ZRSR2</label>
    </interactant>
    <organismsDiffer>false</organismsDiffer>
    <experiments>3</experiments>
</comment>
<comment type="interaction">
    <interactant intactId="EBI-539478">
        <id>Q96SB4</id>
    </interactant>
    <interactant intactId="EBI-25475856">
        <id>P0DTC9</id>
        <label>N</label>
    </interactant>
    <organismsDiffer>true</organismsDiffer>
    <experiments>3</experiments>
</comment>
<comment type="interaction">
    <interactant intactId="EBI-539478">
        <id>Q96SB4</id>
    </interactant>
    <interactant intactId="EBI-539530">
        <id>O88453</id>
        <label>Safb</label>
    </interactant>
    <organismsDiffer>true</organismsDiffer>
    <experiments>2</experiments>
</comment>
<comment type="interaction">
    <interactant intactId="EBI-539478">
        <id>Q96SB4</id>
    </interactant>
    <interactant intactId="EBI-7321730">
        <id>A7Y3Z3</id>
    </interactant>
    <organismsDiffer>true</organismsDiffer>
    <experiments>4</experiments>
</comment>
<comment type="interaction">
    <interactant intactId="EBI-5773439">
        <id>Q96SB4-2</id>
    </interactant>
    <interactant intactId="EBI-348298">
        <id>Q15424</id>
        <label>SAFB</label>
    </interactant>
    <organismsDiffer>false</organismsDiffer>
    <experiments>2</experiments>
</comment>
<comment type="interaction">
    <interactant intactId="EBI-7160164">
        <id>Q96SB4-3</id>
    </interactant>
    <interactant intactId="EBI-348298">
        <id>Q15424</id>
        <label>SAFB</label>
    </interactant>
    <organismsDiffer>false</organismsDiffer>
    <experiments>2</experiments>
</comment>
<comment type="subcellular location">
    <molecule>Isoform 2</molecule>
    <subcellularLocation>
        <location>Cytoplasm</location>
    </subcellularLocation>
    <subcellularLocation>
        <location>Nucleus</location>
    </subcellularLocation>
    <subcellularLocation>
        <location>Nucleus matrix</location>
    </subcellularLocation>
    <subcellularLocation>
        <location>Microsome</location>
    </subcellularLocation>
    <text>Shuttles between the nucleus and the cytoplasm. Inhibition of the Hsp90 ATPase activity, osmotic stress and interaction with HHV-1 ICP27 protein can induce its translocation to the nucleus. KAT5/TIP60 inhibits its nuclear translocation.</text>
</comment>
<comment type="subcellular location">
    <molecule>Isoform 1</molecule>
    <subcellularLocation>
        <location>Cytoplasm</location>
    </subcellularLocation>
    <subcellularLocation>
        <location>Nucleus matrix</location>
    </subcellularLocation>
    <subcellularLocation>
        <location>Microsome</location>
    </subcellularLocation>
    <text>Mainly localized in the microsomal fraction and the cytoplasm, and to a lesser extent in the nuclear matrix.</text>
</comment>
<comment type="subcellular location">
    <subcellularLocation>
        <location evidence="22">Cytoplasm</location>
    </subcellularLocation>
    <subcellularLocation>
        <location evidence="22">Nucleus</location>
        <location evidence="22">Nucleoplasm</location>
    </subcellularLocation>
    <subcellularLocation>
        <location evidence="22">Nucleus speckle</location>
    </subcellularLocation>
    <subcellularLocation>
        <location evidence="22">Chromosome</location>
    </subcellularLocation>
    <text evidence="22">Preferentially localizes to the promoter of gene coding regions.</text>
</comment>
<comment type="alternative products">
    <event type="alternative splicing"/>
    <isoform>
        <id>Q96SB4-2</id>
        <name evidence="5 23">2</name>
        <sequence type="displayed"/>
    </isoform>
    <isoform>
        <id>Q96SB4-3</id>
        <name>1</name>
        <name>1a</name>
        <sequence type="described" ref="VSP_042130"/>
    </isoform>
    <isoform>
        <id>Q96SB4-4</id>
        <name>3</name>
        <sequence type="described" ref="VSP_057356"/>
    </isoform>
</comment>
<comment type="tissue specificity">
    <text evidence="4 5 21">Isoform 2 is predominantly expressed in the testis but is also present at lower levels in heart, ovary, small intestine, liver, kidney, pancreas and skeletal muscle. Isoform 1 is only seen in the testis, at lower levels than isoform 2. Highly expressed in different erythroid and lymphoid cell lines, with isoform 2 being far more abundant than isoform 1.</text>
</comment>
<comment type="miscellaneous">
    <molecule>Isoform 1</molecule>
    <text evidence="27">Due to intron retention.</text>
</comment>
<comment type="similarity">
    <text evidence="27">Belongs to the protein kinase superfamily. CMGC Ser/Thr protein kinase family.</text>
</comment>
<dbReference type="EC" id="2.7.11.1"/>
<dbReference type="EMBL" id="U09564">
    <property type="protein sequence ID" value="AAA20530.1"/>
    <property type="molecule type" value="mRNA"/>
</dbReference>
<dbReference type="EMBL" id="AJ318054">
    <property type="protein sequence ID" value="CAC39299.1"/>
    <property type="molecule type" value="mRNA"/>
</dbReference>
<dbReference type="EMBL" id="AK299591">
    <property type="protein sequence ID" value="BAG61523.1"/>
    <property type="molecule type" value="mRNA"/>
</dbReference>
<dbReference type="EMBL" id="Z99128">
    <property type="status" value="NOT_ANNOTATED_CDS"/>
    <property type="molecule type" value="Genomic_DNA"/>
</dbReference>
<dbReference type="EMBL" id="CH471081">
    <property type="protein sequence ID" value="EAX03859.1"/>
    <property type="molecule type" value="Genomic_DNA"/>
</dbReference>
<dbReference type="EMBL" id="BC038292">
    <property type="protein sequence ID" value="AAH38292.1"/>
    <property type="molecule type" value="mRNA"/>
</dbReference>
<dbReference type="CCDS" id="CCDS47415.1">
    <molecule id="Q96SB4-2"/>
</dbReference>
<dbReference type="PIR" id="S45337">
    <property type="entry name" value="S45337"/>
</dbReference>
<dbReference type="RefSeq" id="NP_003128.3">
    <molecule id="Q96SB4-2"/>
    <property type="nucleotide sequence ID" value="NM_003137.4"/>
</dbReference>
<dbReference type="PDB" id="1WAK">
    <property type="method" value="X-ray"/>
    <property type="resolution" value="1.73 A"/>
    <property type="chains" value="A=42-655"/>
</dbReference>
<dbReference type="PDB" id="1WBP">
    <property type="method" value="X-ray"/>
    <property type="resolution" value="2.40 A"/>
    <property type="chains" value="A=42-655"/>
</dbReference>
<dbReference type="PDB" id="3BEG">
    <property type="method" value="X-ray"/>
    <property type="resolution" value="2.90 A"/>
    <property type="chains" value="A=58-255, A=474-655"/>
</dbReference>
<dbReference type="PDB" id="4WUA">
    <property type="method" value="X-ray"/>
    <property type="resolution" value="2.00 A"/>
    <property type="chains" value="A=42-255, A=474-655"/>
</dbReference>
<dbReference type="PDB" id="5MXX">
    <property type="method" value="X-ray"/>
    <property type="resolution" value="1.75 A"/>
    <property type="chains" value="A=40-655"/>
</dbReference>
<dbReference type="PDB" id="5MY8">
    <property type="method" value="X-ray"/>
    <property type="resolution" value="1.70 A"/>
    <property type="chains" value="A=58-255, A=474-655"/>
</dbReference>
<dbReference type="PDB" id="5NNG">
    <property type="method" value="X-ray"/>
    <property type="resolution" value="1.20 A"/>
    <property type="chains" value="B=582-591"/>
</dbReference>
<dbReference type="PDB" id="5XV7">
    <property type="method" value="X-ray"/>
    <property type="resolution" value="2.32 A"/>
    <property type="chains" value="A=67-655"/>
</dbReference>
<dbReference type="PDB" id="6FAD">
    <property type="method" value="X-ray"/>
    <property type="resolution" value="2.80 A"/>
    <property type="chains" value="A/B/C/D=42-655"/>
</dbReference>
<dbReference type="PDB" id="7DD1">
    <property type="method" value="X-ray"/>
    <property type="resolution" value="2.05 A"/>
    <property type="chains" value="A=58-255, A=474-655"/>
</dbReference>
<dbReference type="PDB" id="7PQS">
    <property type="method" value="X-ray"/>
    <property type="resolution" value="2.20 A"/>
    <property type="chains" value="A/B=58-655"/>
</dbReference>
<dbReference type="PDB" id="7ZKS">
    <property type="method" value="X-ray"/>
    <property type="resolution" value="2.28 A"/>
    <property type="chains" value="A=50-655"/>
</dbReference>
<dbReference type="PDBsum" id="1WAK"/>
<dbReference type="PDBsum" id="1WBP"/>
<dbReference type="PDBsum" id="3BEG"/>
<dbReference type="PDBsum" id="4WUA"/>
<dbReference type="PDBsum" id="5MXX"/>
<dbReference type="PDBsum" id="5MY8"/>
<dbReference type="PDBsum" id="5NNG"/>
<dbReference type="PDBsum" id="5XV7"/>
<dbReference type="PDBsum" id="6FAD"/>
<dbReference type="PDBsum" id="7DD1"/>
<dbReference type="PDBsum" id="7PQS"/>
<dbReference type="PDBsum" id="7ZKS"/>
<dbReference type="SMR" id="Q96SB4"/>
<dbReference type="BioGRID" id="112610">
    <property type="interactions" value="494"/>
</dbReference>
<dbReference type="CORUM" id="Q96SB4"/>
<dbReference type="DIP" id="DIP-33888N"/>
<dbReference type="FunCoup" id="Q96SB4">
    <property type="interactions" value="3403"/>
</dbReference>
<dbReference type="IntAct" id="Q96SB4">
    <property type="interactions" value="392"/>
</dbReference>
<dbReference type="MINT" id="Q96SB4"/>
<dbReference type="STRING" id="9606.ENSP00000362931"/>
<dbReference type="BindingDB" id="Q96SB4"/>
<dbReference type="ChEMBL" id="CHEMBL4375"/>
<dbReference type="DrugCentral" id="Q96SB4"/>
<dbReference type="GuidetoPHARMACOLOGY" id="2208"/>
<dbReference type="MoonDB" id="Q96SB4">
    <property type="type" value="Predicted"/>
</dbReference>
<dbReference type="GlyGen" id="Q96SB4">
    <property type="glycosylation" value="1 site, 1 O-linked glycan (1 site)"/>
</dbReference>
<dbReference type="iPTMnet" id="Q96SB4"/>
<dbReference type="MetOSite" id="Q96SB4"/>
<dbReference type="PhosphoSitePlus" id="Q96SB4"/>
<dbReference type="SwissPalm" id="Q96SB4"/>
<dbReference type="BioMuta" id="SRPK1"/>
<dbReference type="DMDM" id="209572680"/>
<dbReference type="CPTAC" id="CPTAC-3033"/>
<dbReference type="jPOST" id="Q96SB4"/>
<dbReference type="MassIVE" id="Q96SB4"/>
<dbReference type="PaxDb" id="9606-ENSP00000362931"/>
<dbReference type="PeptideAtlas" id="Q96SB4"/>
<dbReference type="ProteomicsDB" id="78098">
    <molecule id="Q96SB4-2"/>
</dbReference>
<dbReference type="ProteomicsDB" id="78099">
    <molecule id="Q96SB4-3"/>
</dbReference>
<dbReference type="Pumba" id="Q96SB4"/>
<dbReference type="Antibodypedia" id="6714">
    <property type="antibodies" value="483 antibodies from 32 providers"/>
</dbReference>
<dbReference type="DNASU" id="6732"/>
<dbReference type="Ensembl" id="ENST00000373825.7">
    <molecule id="Q96SB4-2"/>
    <property type="protein sequence ID" value="ENSP00000362931.2"/>
    <property type="gene ID" value="ENSG00000096063.16"/>
</dbReference>
<dbReference type="Ensembl" id="ENST00000423325.6">
    <molecule id="Q96SB4-4"/>
    <property type="protein sequence ID" value="ENSP00000391069.2"/>
    <property type="gene ID" value="ENSG00000096063.16"/>
</dbReference>
<dbReference type="GeneID" id="6732"/>
<dbReference type="KEGG" id="hsa:6732"/>
<dbReference type="MANE-Select" id="ENST00000373825.7">
    <property type="protein sequence ID" value="ENSP00000362931.2"/>
    <property type="RefSeq nucleotide sequence ID" value="NM_003137.5"/>
    <property type="RefSeq protein sequence ID" value="NP_003128.3"/>
</dbReference>
<dbReference type="UCSC" id="uc003olj.4">
    <molecule id="Q96SB4-2"/>
    <property type="organism name" value="human"/>
</dbReference>
<dbReference type="AGR" id="HGNC:11305"/>
<dbReference type="CTD" id="6732"/>
<dbReference type="DisGeNET" id="6732"/>
<dbReference type="GeneCards" id="SRPK1"/>
<dbReference type="HGNC" id="HGNC:11305">
    <property type="gene designation" value="SRPK1"/>
</dbReference>
<dbReference type="HPA" id="ENSG00000096063">
    <property type="expression patterns" value="Low tissue specificity"/>
</dbReference>
<dbReference type="MIM" id="601939">
    <property type="type" value="gene"/>
</dbReference>
<dbReference type="neXtProt" id="NX_Q96SB4"/>
<dbReference type="OpenTargets" id="ENSG00000096063"/>
<dbReference type="PharmGKB" id="PA36129"/>
<dbReference type="VEuPathDB" id="HostDB:ENSG00000096063"/>
<dbReference type="eggNOG" id="KOG1290">
    <property type="taxonomic scope" value="Eukaryota"/>
</dbReference>
<dbReference type="GeneTree" id="ENSGT00940000155264"/>
<dbReference type="HOGENOM" id="CLU_000288_81_9_1"/>
<dbReference type="InParanoid" id="Q96SB4"/>
<dbReference type="OMA" id="HEGQRPP"/>
<dbReference type="OrthoDB" id="2649at2759"/>
<dbReference type="PAN-GO" id="Q96SB4">
    <property type="GO annotations" value="6 GO annotations based on evolutionary models"/>
</dbReference>
<dbReference type="PhylomeDB" id="Q96SB4"/>
<dbReference type="TreeFam" id="TF105334"/>
<dbReference type="PathwayCommons" id="Q96SB4"/>
<dbReference type="Reactome" id="R-HSA-9694631">
    <property type="pathway name" value="Maturation of nucleoprotein"/>
</dbReference>
<dbReference type="Reactome" id="R-HSA-9821993">
    <property type="pathway name" value="Replacement of protamines by nucleosomes in the male pronucleus"/>
</dbReference>
<dbReference type="SignaLink" id="Q96SB4"/>
<dbReference type="SIGNOR" id="Q96SB4"/>
<dbReference type="BioGRID-ORCS" id="6732">
    <property type="hits" value="38 hits in 1169 CRISPR screens"/>
</dbReference>
<dbReference type="CD-CODE" id="91857CE7">
    <property type="entry name" value="Nucleolus"/>
</dbReference>
<dbReference type="ChiTaRS" id="SRPK1">
    <property type="organism name" value="human"/>
</dbReference>
<dbReference type="EvolutionaryTrace" id="Q96SB4"/>
<dbReference type="GeneWiki" id="SRPK1"/>
<dbReference type="GenomeRNAi" id="6732"/>
<dbReference type="Pharos" id="Q96SB4">
    <property type="development level" value="Tchem"/>
</dbReference>
<dbReference type="PRO" id="PR:Q96SB4"/>
<dbReference type="Proteomes" id="UP000005640">
    <property type="component" value="Chromosome 6"/>
</dbReference>
<dbReference type="RNAct" id="Q96SB4">
    <property type="molecule type" value="protein"/>
</dbReference>
<dbReference type="Bgee" id="ENSG00000096063">
    <property type="expression patterns" value="Expressed in sperm and 207 other cell types or tissues"/>
</dbReference>
<dbReference type="ExpressionAtlas" id="Q96SB4">
    <property type="expression patterns" value="baseline and differential"/>
</dbReference>
<dbReference type="GO" id="GO:0000785">
    <property type="term" value="C:chromatin"/>
    <property type="evidence" value="ECO:0000314"/>
    <property type="project" value="UniProtKB"/>
</dbReference>
<dbReference type="GO" id="GO:0005737">
    <property type="term" value="C:cytoplasm"/>
    <property type="evidence" value="ECO:0000314"/>
    <property type="project" value="UniProtKB"/>
</dbReference>
<dbReference type="GO" id="GO:0005829">
    <property type="term" value="C:cytosol"/>
    <property type="evidence" value="ECO:0000314"/>
    <property type="project" value="HPA"/>
</dbReference>
<dbReference type="GO" id="GO:0005783">
    <property type="term" value="C:endoplasmic reticulum"/>
    <property type="evidence" value="ECO:0007669"/>
    <property type="project" value="UniProtKB-KW"/>
</dbReference>
<dbReference type="GO" id="GO:0016363">
    <property type="term" value="C:nuclear matrix"/>
    <property type="evidence" value="ECO:0007669"/>
    <property type="project" value="UniProtKB-SubCell"/>
</dbReference>
<dbReference type="GO" id="GO:0016607">
    <property type="term" value="C:nuclear speck"/>
    <property type="evidence" value="ECO:0000314"/>
    <property type="project" value="UniProtKB"/>
</dbReference>
<dbReference type="GO" id="GO:0005654">
    <property type="term" value="C:nucleoplasm"/>
    <property type="evidence" value="ECO:0000314"/>
    <property type="project" value="HPA"/>
</dbReference>
<dbReference type="GO" id="GO:0005634">
    <property type="term" value="C:nucleus"/>
    <property type="evidence" value="ECO:0000314"/>
    <property type="project" value="UniProtKB"/>
</dbReference>
<dbReference type="GO" id="GO:0005886">
    <property type="term" value="C:plasma membrane"/>
    <property type="evidence" value="ECO:0000314"/>
    <property type="project" value="HPA"/>
</dbReference>
<dbReference type="GO" id="GO:0005524">
    <property type="term" value="F:ATP binding"/>
    <property type="evidence" value="ECO:0000314"/>
    <property type="project" value="UniProtKB"/>
</dbReference>
<dbReference type="GO" id="GO:0000287">
    <property type="term" value="F:magnesium ion binding"/>
    <property type="evidence" value="ECO:0000314"/>
    <property type="project" value="UniProtKB"/>
</dbReference>
<dbReference type="GO" id="GO:0004672">
    <property type="term" value="F:protein kinase activity"/>
    <property type="evidence" value="ECO:0000304"/>
    <property type="project" value="ProtInc"/>
</dbReference>
<dbReference type="GO" id="GO:0106310">
    <property type="term" value="F:protein serine kinase activity"/>
    <property type="evidence" value="ECO:0007669"/>
    <property type="project" value="RHEA"/>
</dbReference>
<dbReference type="GO" id="GO:0004674">
    <property type="term" value="F:protein serine/threonine kinase activity"/>
    <property type="evidence" value="ECO:0000314"/>
    <property type="project" value="UniProtKB"/>
</dbReference>
<dbReference type="GO" id="GO:0003723">
    <property type="term" value="F:RNA binding"/>
    <property type="evidence" value="ECO:0007005"/>
    <property type="project" value="UniProtKB"/>
</dbReference>
<dbReference type="GO" id="GO:0007059">
    <property type="term" value="P:chromosome segregation"/>
    <property type="evidence" value="ECO:0000314"/>
    <property type="project" value="UniProtKB"/>
</dbReference>
<dbReference type="GO" id="GO:0045087">
    <property type="term" value="P:innate immune response"/>
    <property type="evidence" value="ECO:0000305"/>
    <property type="project" value="BHF-UCL"/>
</dbReference>
<dbReference type="GO" id="GO:0035556">
    <property type="term" value="P:intracellular signal transduction"/>
    <property type="evidence" value="ECO:0000314"/>
    <property type="project" value="UniProtKB"/>
</dbReference>
<dbReference type="GO" id="GO:0045071">
    <property type="term" value="P:negative regulation of viral genome replication"/>
    <property type="evidence" value="ECO:0000314"/>
    <property type="project" value="BHF-UCL"/>
</dbReference>
<dbReference type="GO" id="GO:0045070">
    <property type="term" value="P:positive regulation of viral genome replication"/>
    <property type="evidence" value="ECO:0000314"/>
    <property type="project" value="BHF-UCL"/>
</dbReference>
<dbReference type="GO" id="GO:0006468">
    <property type="term" value="P:protein phosphorylation"/>
    <property type="evidence" value="ECO:0000314"/>
    <property type="project" value="UniProtKB"/>
</dbReference>
<dbReference type="GO" id="GO:0050684">
    <property type="term" value="P:regulation of mRNA processing"/>
    <property type="evidence" value="ECO:0000314"/>
    <property type="project" value="UniProtKB"/>
</dbReference>
<dbReference type="GO" id="GO:0048024">
    <property type="term" value="P:regulation of mRNA splicing, via spliceosome"/>
    <property type="evidence" value="ECO:0000304"/>
    <property type="project" value="UniProtKB"/>
</dbReference>
<dbReference type="GO" id="GO:0008380">
    <property type="term" value="P:RNA splicing"/>
    <property type="evidence" value="ECO:0000304"/>
    <property type="project" value="ProtInc"/>
</dbReference>
<dbReference type="GO" id="GO:0035092">
    <property type="term" value="P:sperm DNA condensation"/>
    <property type="evidence" value="ECO:0000304"/>
    <property type="project" value="UniProtKB"/>
</dbReference>
<dbReference type="GO" id="GO:0000245">
    <property type="term" value="P:spliceosomal complex assembly"/>
    <property type="evidence" value="ECO:0000318"/>
    <property type="project" value="GO_Central"/>
</dbReference>
<dbReference type="FunFam" id="1.10.510.10:FF:000895">
    <property type="entry name" value="SRSF protein kinase 1"/>
    <property type="match status" value="1"/>
</dbReference>
<dbReference type="FunFam" id="1.10.510.10:FF:000105">
    <property type="entry name" value="SRSF protein kinase 2"/>
    <property type="match status" value="1"/>
</dbReference>
<dbReference type="FunFam" id="3.30.200.20:FF:000163">
    <property type="entry name" value="SRSF protein kinase 2 isoform X1"/>
    <property type="match status" value="1"/>
</dbReference>
<dbReference type="Gene3D" id="3.30.200.20">
    <property type="entry name" value="Phosphorylase Kinase, domain 1"/>
    <property type="match status" value="1"/>
</dbReference>
<dbReference type="Gene3D" id="1.10.510.10">
    <property type="entry name" value="Transferase(Phosphotransferase) domain 1"/>
    <property type="match status" value="2"/>
</dbReference>
<dbReference type="InterPro" id="IPR011009">
    <property type="entry name" value="Kinase-like_dom_sf"/>
</dbReference>
<dbReference type="InterPro" id="IPR000719">
    <property type="entry name" value="Prot_kinase_dom"/>
</dbReference>
<dbReference type="InterPro" id="IPR017441">
    <property type="entry name" value="Protein_kinase_ATP_BS"/>
</dbReference>
<dbReference type="InterPro" id="IPR008271">
    <property type="entry name" value="Ser/Thr_kinase_AS"/>
</dbReference>
<dbReference type="InterPro" id="IPR051334">
    <property type="entry name" value="SRPK"/>
</dbReference>
<dbReference type="PANTHER" id="PTHR47634">
    <property type="entry name" value="PROTEIN KINASE DOMAIN-CONTAINING PROTEIN-RELATED"/>
    <property type="match status" value="1"/>
</dbReference>
<dbReference type="PANTHER" id="PTHR47634:SF4">
    <property type="entry name" value="SRSF PROTEIN KINASE 1"/>
    <property type="match status" value="1"/>
</dbReference>
<dbReference type="Pfam" id="PF00069">
    <property type="entry name" value="Pkinase"/>
    <property type="match status" value="2"/>
</dbReference>
<dbReference type="SMART" id="SM00220">
    <property type="entry name" value="S_TKc"/>
    <property type="match status" value="1"/>
</dbReference>
<dbReference type="SUPFAM" id="SSF56112">
    <property type="entry name" value="Protein kinase-like (PK-like)"/>
    <property type="match status" value="1"/>
</dbReference>
<dbReference type="PROSITE" id="PS00107">
    <property type="entry name" value="PROTEIN_KINASE_ATP"/>
    <property type="match status" value="1"/>
</dbReference>
<dbReference type="PROSITE" id="PS50011">
    <property type="entry name" value="PROTEIN_KINASE_DOM"/>
    <property type="match status" value="1"/>
</dbReference>
<dbReference type="PROSITE" id="PS00108">
    <property type="entry name" value="PROTEIN_KINASE_ST"/>
    <property type="match status" value="1"/>
</dbReference>
<protein>
    <recommendedName>
        <fullName>SRSF protein kinase 1</fullName>
        <ecNumber>2.7.11.1</ecNumber>
    </recommendedName>
    <alternativeName>
        <fullName>SFRS protein kinase 1</fullName>
    </alternativeName>
    <alternativeName>
        <fullName>Serine/arginine-rich protein-specific kinase 1</fullName>
        <shortName>SR-protein-specific kinase 1</shortName>
    </alternativeName>
</protein>
<feature type="chain" id="PRO_0000086674" description="SRSF protein kinase 1">
    <location>
        <begin position="1"/>
        <end position="655"/>
    </location>
</feature>
<feature type="domain" description="Protein kinase" evidence="1">
    <location>
        <begin position="80"/>
        <end position="653"/>
    </location>
</feature>
<feature type="region of interest" description="Disordered" evidence="2">
    <location>
        <begin position="1"/>
        <end position="57"/>
    </location>
</feature>
<feature type="region of interest" description="Disordered" evidence="2">
    <location>
        <begin position="238"/>
        <end position="341"/>
    </location>
</feature>
<feature type="region of interest" description="Disordered" evidence="2">
    <location>
        <begin position="397"/>
        <end position="417"/>
    </location>
</feature>
<feature type="compositionally biased region" description="Basic residues" evidence="2">
    <location>
        <begin position="10"/>
        <end position="22"/>
    </location>
</feature>
<feature type="compositionally biased region" description="Acidic residues" evidence="2">
    <location>
        <begin position="40"/>
        <end position="57"/>
    </location>
</feature>
<feature type="compositionally biased region" description="Basic residues" evidence="2">
    <location>
        <begin position="265"/>
        <end position="276"/>
    </location>
</feature>
<feature type="compositionally biased region" description="Basic and acidic residues" evidence="2">
    <location>
        <begin position="277"/>
        <end position="288"/>
    </location>
</feature>
<feature type="compositionally biased region" description="Basic and acidic residues" evidence="2">
    <location>
        <begin position="304"/>
        <end position="318"/>
    </location>
</feature>
<feature type="active site" description="Proton acceptor">
    <location>
        <position position="213"/>
    </location>
</feature>
<feature type="binding site" evidence="1 11">
    <location>
        <begin position="86"/>
        <end position="94"/>
    </location>
    <ligand>
        <name>ATP</name>
        <dbReference type="ChEBI" id="CHEBI:30616"/>
    </ligand>
</feature>
<feature type="binding site" evidence="1 11">
    <location>
        <position position="109"/>
    </location>
    <ligand>
        <name>ATP</name>
        <dbReference type="ChEBI" id="CHEBI:30616"/>
    </ligand>
</feature>
<feature type="binding site" evidence="1 11">
    <location>
        <begin position="166"/>
        <end position="168"/>
    </location>
    <ligand>
        <name>ATP</name>
        <dbReference type="ChEBI" id="CHEBI:30616"/>
    </ligand>
</feature>
<feature type="modified residue" description="Phosphoserine; by CK2" evidence="7 31 32 33 34 35">
    <location>
        <position position="51"/>
    </location>
</feature>
<feature type="modified residue" description="Phosphoserine" evidence="35 36">
    <location>
        <position position="309"/>
    </location>
</feature>
<feature type="modified residue" description="Phosphoserine" evidence="35 36">
    <location>
        <position position="311"/>
    </location>
</feature>
<feature type="modified residue" description="Phosphoserine" evidence="35">
    <location>
        <position position="333"/>
    </location>
</feature>
<feature type="modified residue" description="Phosphoserine; by CK2" evidence="7">
    <location>
        <position position="555"/>
    </location>
</feature>
<feature type="splice variant" id="VSP_057356" description="In isoform 3." evidence="26">
    <original>MERKVLALQARKKRTKAKKDKAQRK</original>
    <variation>MGIFVSFLR</variation>
    <location>
        <begin position="1"/>
        <end position="25"/>
    </location>
</feature>
<feature type="splice variant" id="VSP_042130" description="In isoform 1." evidence="25">
    <original>K</original>
    <variation>KGERWSGLRHEGQWSPGRGPGQRRELRLTAAVRFPDVRRPSTEVAPPHTPCLWAAGPRPSFRASSGAGRSRPLFPARPARALGPLQGPALGGRRRPPPARPLTRPETPPAHPARALLCAPWAASPTPAASPSPQPPPRQAPQPGLAPLLGLHPHLGRLLSSTFALHPSLSPA</variation>
    <location>
        <position position="4"/>
    </location>
</feature>
<feature type="sequence variant" id="VAR_051669" description="In dbSNP:rs35519113.">
    <original>I</original>
    <variation>T</variation>
    <location>
        <position position="72"/>
    </location>
</feature>
<feature type="mutagenesis site" description="No effect on protein phosphorylation." evidence="7">
    <original>S</original>
    <variation>A</variation>
    <location>
        <position position="37"/>
    </location>
</feature>
<feature type="mutagenesis site" description="Protein phosphorylation impaired at this position." evidence="7">
    <original>S</original>
    <variation>A</variation>
    <location>
        <position position="51"/>
    </location>
</feature>
<feature type="mutagenesis site" description="No effect on protein phosphorylation." evidence="7">
    <original>S</original>
    <variation>A</variation>
    <location>
        <position position="222"/>
    </location>
</feature>
<feature type="mutagenesis site" description="No effect on protein phosphorylation." evidence="7">
    <original>S</original>
    <variation>G</variation>
    <location>
        <position position="311"/>
    </location>
</feature>
<feature type="mutagenesis site" description="No effect on protein phosphorylation." evidence="7">
    <original>S</original>
    <variation>G</variation>
    <location>
        <position position="436"/>
    </location>
</feature>
<feature type="mutagenesis site" description="Protein phosphorylation impaired at this position." evidence="7">
    <original>S</original>
    <variation>A</variation>
    <location>
        <position position="555"/>
    </location>
</feature>
<feature type="mutagenesis site" description="No effect on protein phosphorylation." evidence="7">
    <original>S</original>
    <variation>A</variation>
    <location>
        <position position="619"/>
    </location>
</feature>
<feature type="sequence conflict" description="In Ref. 6; AAH38292." evidence="27" ref="6">
    <original>I</original>
    <variation>T</variation>
    <location>
        <position position="210"/>
    </location>
</feature>
<feature type="sequence conflict" description="In Ref. 7; AA sequence." evidence="27" ref="7">
    <original>I</original>
    <variation>L</variation>
    <location>
        <position position="360"/>
    </location>
</feature>
<feature type="sequence conflict" description="In Ref. 7; AA sequence." evidence="27" ref="7">
    <original>I</original>
    <variation>L</variation>
    <location>
        <position position="363"/>
    </location>
</feature>
<feature type="sequence conflict" description="In Ref. 1; AAA20530." evidence="27" ref="1">
    <original>SQ</original>
    <variation>LP</variation>
    <location>
        <begin position="400"/>
        <end position="401"/>
    </location>
</feature>
<feature type="helix" evidence="39">
    <location>
        <begin position="59"/>
        <end position="61"/>
    </location>
</feature>
<feature type="turn" evidence="40">
    <location>
        <begin position="77"/>
        <end position="79"/>
    </location>
</feature>
<feature type="strand" evidence="40">
    <location>
        <begin position="80"/>
        <end position="88"/>
    </location>
</feature>
<feature type="strand" evidence="40">
    <location>
        <begin position="90"/>
        <end position="99"/>
    </location>
</feature>
<feature type="turn" evidence="40">
    <location>
        <begin position="100"/>
        <end position="103"/>
    </location>
</feature>
<feature type="strand" evidence="40">
    <location>
        <begin position="104"/>
        <end position="111"/>
    </location>
</feature>
<feature type="helix" evidence="40">
    <location>
        <begin position="115"/>
        <end position="133"/>
    </location>
</feature>
<feature type="helix" evidence="40">
    <location>
        <begin position="139"/>
        <end position="143"/>
    </location>
</feature>
<feature type="strand" evidence="40">
    <location>
        <begin position="147"/>
        <end position="154"/>
    </location>
</feature>
<feature type="strand" evidence="40">
    <location>
        <begin position="159"/>
        <end position="166"/>
    </location>
</feature>
<feature type="strand" evidence="38">
    <location>
        <begin position="168"/>
        <end position="171"/>
    </location>
</feature>
<feature type="helix" evidence="40">
    <location>
        <begin position="172"/>
        <end position="178"/>
    </location>
</feature>
<feature type="turn" evidence="40">
    <location>
        <begin position="179"/>
        <end position="181"/>
    </location>
</feature>
<feature type="helix" evidence="40">
    <location>
        <begin position="186"/>
        <end position="205"/>
    </location>
</feature>
<feature type="helix" evidence="40">
    <location>
        <begin position="216"/>
        <end position="218"/>
    </location>
</feature>
<feature type="strand" evidence="40">
    <location>
        <begin position="219"/>
        <end position="221"/>
    </location>
</feature>
<feature type="helix" evidence="40">
    <location>
        <begin position="225"/>
        <end position="238"/>
    </location>
</feature>
<feature type="helix" evidence="40">
    <location>
        <begin position="485"/>
        <end position="490"/>
    </location>
</feature>
<feature type="strand" evidence="40">
    <location>
        <begin position="493"/>
        <end position="495"/>
    </location>
</feature>
<feature type="helix" evidence="37">
    <location>
        <begin position="498"/>
        <end position="500"/>
    </location>
</feature>
<feature type="turn" evidence="39">
    <location>
        <begin position="504"/>
        <end position="506"/>
    </location>
</feature>
<feature type="helix" evidence="40">
    <location>
        <begin position="515"/>
        <end position="517"/>
    </location>
</feature>
<feature type="helix" evidence="40">
    <location>
        <begin position="520"/>
        <end position="524"/>
    </location>
</feature>
<feature type="helix" evidence="40">
    <location>
        <begin position="531"/>
        <end position="546"/>
    </location>
</feature>
<feature type="strand" evidence="40">
    <location>
        <begin position="557"/>
        <end position="559"/>
    </location>
</feature>
<feature type="helix" evidence="40">
    <location>
        <begin position="561"/>
        <end position="573"/>
    </location>
</feature>
<feature type="helix" evidence="40">
    <location>
        <begin position="578"/>
        <end position="583"/>
    </location>
</feature>
<feature type="helix" evidence="40">
    <location>
        <begin position="587"/>
        <end position="589"/>
    </location>
</feature>
<feature type="strand" evidence="40">
    <location>
        <begin position="595"/>
        <end position="599"/>
    </location>
</feature>
<feature type="helix" evidence="40">
    <location>
        <begin position="608"/>
        <end position="614"/>
    </location>
</feature>
<feature type="helix" evidence="40">
    <location>
        <begin position="620"/>
        <end position="630"/>
    </location>
</feature>
<feature type="helix" evidence="40">
    <location>
        <begin position="631"/>
        <end position="634"/>
    </location>
</feature>
<feature type="helix" evidence="40">
    <location>
        <begin position="638"/>
        <end position="640"/>
    </location>
</feature>
<feature type="helix" evidence="40">
    <location>
        <begin position="644"/>
        <end position="648"/>
    </location>
</feature>
<feature type="helix" evidence="40">
    <location>
        <begin position="651"/>
        <end position="654"/>
    </location>
</feature>
<evidence type="ECO:0000255" key="1">
    <source>
        <dbReference type="PROSITE-ProRule" id="PRU00159"/>
    </source>
</evidence>
<evidence type="ECO:0000256" key="2">
    <source>
        <dbReference type="SAM" id="MobiDB-lite"/>
    </source>
</evidence>
<evidence type="ECO:0000269" key="3">
    <source>
    </source>
</evidence>
<evidence type="ECO:0000269" key="4">
    <source>
    </source>
</evidence>
<evidence type="ECO:0000269" key="5">
    <source>
    </source>
</evidence>
<evidence type="ECO:0000269" key="6">
    <source>
    </source>
</evidence>
<evidence type="ECO:0000269" key="7">
    <source>
    </source>
</evidence>
<evidence type="ECO:0000269" key="8">
    <source>
    </source>
</evidence>
<evidence type="ECO:0000269" key="9">
    <source>
    </source>
</evidence>
<evidence type="ECO:0000269" key="10">
    <source>
    </source>
</evidence>
<evidence type="ECO:0000269" key="11">
    <source>
    </source>
</evidence>
<evidence type="ECO:0000269" key="12">
    <source>
    </source>
</evidence>
<evidence type="ECO:0000269" key="13">
    <source>
    </source>
</evidence>
<evidence type="ECO:0000269" key="14">
    <source>
    </source>
</evidence>
<evidence type="ECO:0000269" key="15">
    <source>
    </source>
</evidence>
<evidence type="ECO:0000269" key="16">
    <source>
    </source>
</evidence>
<evidence type="ECO:0000269" key="17">
    <source>
    </source>
</evidence>
<evidence type="ECO:0000269" key="18">
    <source>
    </source>
</evidence>
<evidence type="ECO:0000269" key="19">
    <source>
    </source>
</evidence>
<evidence type="ECO:0000269" key="20">
    <source>
    </source>
</evidence>
<evidence type="ECO:0000269" key="21">
    <source>
    </source>
</evidence>
<evidence type="ECO:0000269" key="22">
    <source>
    </source>
</evidence>
<evidence type="ECO:0000269" key="23">
    <source>
    </source>
</evidence>
<evidence type="ECO:0000269" key="24">
    <source>
    </source>
</evidence>
<evidence type="ECO:0000303" key="25">
    <source>
    </source>
</evidence>
<evidence type="ECO:0000303" key="26">
    <source>
    </source>
</evidence>
<evidence type="ECO:0000305" key="27"/>
<evidence type="ECO:0000312" key="28">
    <source>
        <dbReference type="EMBL" id="AAA20530.1"/>
    </source>
</evidence>
<evidence type="ECO:0000312" key="29">
    <source>
        <dbReference type="EMBL" id="AAH38292.1"/>
    </source>
</evidence>
<evidence type="ECO:0000312" key="30">
    <source>
        <dbReference type="EMBL" id="CAC39299.1"/>
    </source>
</evidence>
<evidence type="ECO:0007744" key="31">
    <source>
    </source>
</evidence>
<evidence type="ECO:0007744" key="32">
    <source>
    </source>
</evidence>
<evidence type="ECO:0007744" key="33">
    <source>
    </source>
</evidence>
<evidence type="ECO:0007744" key="34">
    <source>
    </source>
</evidence>
<evidence type="ECO:0007744" key="35">
    <source>
    </source>
</evidence>
<evidence type="ECO:0007744" key="36">
    <source>
    </source>
</evidence>
<evidence type="ECO:0007829" key="37">
    <source>
        <dbReference type="PDB" id="1WAK"/>
    </source>
</evidence>
<evidence type="ECO:0007829" key="38">
    <source>
        <dbReference type="PDB" id="1WBP"/>
    </source>
</evidence>
<evidence type="ECO:0007829" key="39">
    <source>
        <dbReference type="PDB" id="5MXX"/>
    </source>
</evidence>
<evidence type="ECO:0007829" key="40">
    <source>
        <dbReference type="PDB" id="5MY8"/>
    </source>
</evidence>
<sequence length="655" mass="74325">MERKVLALQARKKRTKAKKDKAQRKSETQHRGSAPHSESDLPEQEEEILGSDDDEQEDPNDYCKGGYHLVKIGDLFNGRYHVIRKLGWGHFSTVWLSWDIQGKKFVAMKVVKSAEHYTETALDEIRLLKSVRNSDPNDPNREMVVQLLDDFKISGVNGTHICMVFEVLGHHLLKWIIKSNYQGLPLPCVKKIIQQVLQGLDYLHTKCRIIHTDIKPENILLSVNEQYIRRLAAEATEWQRSGAPPPSGSAVSTAPQPKPADKMSKNKKKKLKKKQKRQAELLEKRMQEIEEMEKESGPGQKRPNKQEESESPVERPLKENPPNKMTQEKLEESSTIGQDQTLMERDTEGGAAEINCNGVIEVINYTQNSNNETLRHKEDLHNANDCDVQNLNQESSFLSSQNGDSSTSQETDSCTPITSEVSDTMVCQSSSTVGQSFSEQHISQLQESIRAEIPCEDEQEQEHNGPLDNKGKSTAGNFLVNPLEPKNAEKLKVKIADLGNACWVHKHFTEDIQTRQYRSLEVLIGSGYNTPADIWSTACMAFELATGDYLFEPHSGEEYTRDEDHIALIIELLGKVPRKLIVAGKYSKEFFTKKGDLKHITKLKPWGLFEVLVEKYEWSQEEAAGFTDFLLPMLELIPEKRATAAECLRHPWLNS</sequence>